<reference key="1">
    <citation type="journal article" date="2004" name="J. Infect. Dis.">
        <title>Progress toward characterization of the group A Streptococcus metagenome: complete genome sequence of a macrolide-resistant serotype M6 strain.</title>
        <authorList>
            <person name="Banks D.J."/>
            <person name="Porcella S.F."/>
            <person name="Barbian K.D."/>
            <person name="Beres S.B."/>
            <person name="Philips L.E."/>
            <person name="Voyich J.M."/>
            <person name="DeLeo F.R."/>
            <person name="Martin J.M."/>
            <person name="Somerville G.A."/>
            <person name="Musser J.M."/>
        </authorList>
    </citation>
    <scope>NUCLEOTIDE SEQUENCE [LARGE SCALE GENOMIC DNA]</scope>
    <source>
        <strain>ATCC BAA-946 / MGAS10394</strain>
    </source>
</reference>
<dbReference type="EC" id="4.2.3.5" evidence="1"/>
<dbReference type="EMBL" id="CP000003">
    <property type="protein sequence ID" value="AAT86777.1"/>
    <property type="molecule type" value="Genomic_DNA"/>
</dbReference>
<dbReference type="RefSeq" id="WP_002992640.1">
    <property type="nucleotide sequence ID" value="NC_006086.1"/>
</dbReference>
<dbReference type="SMR" id="Q5XCT6"/>
<dbReference type="KEGG" id="spa:M6_Spy0642"/>
<dbReference type="HOGENOM" id="CLU_034547_2_0_9"/>
<dbReference type="UniPathway" id="UPA00053">
    <property type="reaction ID" value="UER00090"/>
</dbReference>
<dbReference type="Proteomes" id="UP000001167">
    <property type="component" value="Chromosome"/>
</dbReference>
<dbReference type="GO" id="GO:0005829">
    <property type="term" value="C:cytosol"/>
    <property type="evidence" value="ECO:0007669"/>
    <property type="project" value="TreeGrafter"/>
</dbReference>
<dbReference type="GO" id="GO:0004107">
    <property type="term" value="F:chorismate synthase activity"/>
    <property type="evidence" value="ECO:0007669"/>
    <property type="project" value="UniProtKB-UniRule"/>
</dbReference>
<dbReference type="GO" id="GO:0010181">
    <property type="term" value="F:FMN binding"/>
    <property type="evidence" value="ECO:0007669"/>
    <property type="project" value="TreeGrafter"/>
</dbReference>
<dbReference type="GO" id="GO:0008652">
    <property type="term" value="P:amino acid biosynthetic process"/>
    <property type="evidence" value="ECO:0007669"/>
    <property type="project" value="UniProtKB-KW"/>
</dbReference>
<dbReference type="GO" id="GO:0009073">
    <property type="term" value="P:aromatic amino acid family biosynthetic process"/>
    <property type="evidence" value="ECO:0007669"/>
    <property type="project" value="UniProtKB-KW"/>
</dbReference>
<dbReference type="GO" id="GO:0009423">
    <property type="term" value="P:chorismate biosynthetic process"/>
    <property type="evidence" value="ECO:0007669"/>
    <property type="project" value="UniProtKB-UniRule"/>
</dbReference>
<dbReference type="CDD" id="cd07304">
    <property type="entry name" value="Chorismate_synthase"/>
    <property type="match status" value="1"/>
</dbReference>
<dbReference type="FunFam" id="3.60.150.10:FF:000002">
    <property type="entry name" value="Chorismate synthase"/>
    <property type="match status" value="1"/>
</dbReference>
<dbReference type="Gene3D" id="3.60.150.10">
    <property type="entry name" value="Chorismate synthase AroC"/>
    <property type="match status" value="1"/>
</dbReference>
<dbReference type="HAMAP" id="MF_00300">
    <property type="entry name" value="Chorismate_synth"/>
    <property type="match status" value="1"/>
</dbReference>
<dbReference type="InterPro" id="IPR000453">
    <property type="entry name" value="Chorismate_synth"/>
</dbReference>
<dbReference type="InterPro" id="IPR035904">
    <property type="entry name" value="Chorismate_synth_AroC_sf"/>
</dbReference>
<dbReference type="InterPro" id="IPR020541">
    <property type="entry name" value="Chorismate_synthase_CS"/>
</dbReference>
<dbReference type="NCBIfam" id="TIGR00033">
    <property type="entry name" value="aroC"/>
    <property type="match status" value="1"/>
</dbReference>
<dbReference type="NCBIfam" id="NF003793">
    <property type="entry name" value="PRK05382.1"/>
    <property type="match status" value="1"/>
</dbReference>
<dbReference type="PANTHER" id="PTHR21085">
    <property type="entry name" value="CHORISMATE SYNTHASE"/>
    <property type="match status" value="1"/>
</dbReference>
<dbReference type="PANTHER" id="PTHR21085:SF0">
    <property type="entry name" value="CHORISMATE SYNTHASE"/>
    <property type="match status" value="1"/>
</dbReference>
<dbReference type="Pfam" id="PF01264">
    <property type="entry name" value="Chorismate_synt"/>
    <property type="match status" value="1"/>
</dbReference>
<dbReference type="PIRSF" id="PIRSF001456">
    <property type="entry name" value="Chorismate_synth"/>
    <property type="match status" value="1"/>
</dbReference>
<dbReference type="SUPFAM" id="SSF103263">
    <property type="entry name" value="Chorismate synthase, AroC"/>
    <property type="match status" value="1"/>
</dbReference>
<dbReference type="PROSITE" id="PS00787">
    <property type="entry name" value="CHORISMATE_SYNTHASE_1"/>
    <property type="match status" value="1"/>
</dbReference>
<dbReference type="PROSITE" id="PS00788">
    <property type="entry name" value="CHORISMATE_SYNTHASE_2"/>
    <property type="match status" value="1"/>
</dbReference>
<dbReference type="PROSITE" id="PS00789">
    <property type="entry name" value="CHORISMATE_SYNTHASE_3"/>
    <property type="match status" value="1"/>
</dbReference>
<sequence length="388" mass="42582">MRYLTAGESHGLSLTAIIEGIPAGLTLHPADIDHELQRRQGGYGRGARMSIETDRVQISSGVRHGKTTGAPITLTVINKDHQKWLDVMAVGDIEETLKLKRRVKHPRPGHADLVGGIKYHFNDLRDALERSSARETTMRVAVGAVAKRILAELGIDMLHHILIFGGITITIPSKLSFRELQERALHSELSIVNPKQEEEIKTYIDKIKKEGDTIGGIIETIVQGVPAGLGSYVQWDKKLDAKLAQAVLSINAFKGVEFGVGFDMGFQKGSQVMDEITWTPTQGYGRQTNHLGGFEGGMTTGQPLVVKGVMKPIPTLYKPLMSVDIDSHEPYKATVERSDPTALPAAGVIMENVVATVLAKEILETFSSTTMSELQKAFSDYRAYVKQF</sequence>
<proteinExistence type="inferred from homology"/>
<accession>Q5XCT6</accession>
<protein>
    <recommendedName>
        <fullName evidence="1">Chorismate synthase</fullName>
        <shortName evidence="1">CS</shortName>
        <ecNumber evidence="1">4.2.3.5</ecNumber>
    </recommendedName>
    <alternativeName>
        <fullName evidence="1">5-enolpyruvylshikimate-3-phosphate phospholyase</fullName>
    </alternativeName>
</protein>
<keyword id="KW-0028">Amino-acid biosynthesis</keyword>
<keyword id="KW-0057">Aromatic amino acid biosynthesis</keyword>
<keyword id="KW-0274">FAD</keyword>
<keyword id="KW-0285">Flavoprotein</keyword>
<keyword id="KW-0288">FMN</keyword>
<keyword id="KW-0456">Lyase</keyword>
<keyword id="KW-0521">NADP</keyword>
<gene>
    <name evidence="1" type="primary">aroC</name>
    <name type="ordered locus">M6_Spy0642</name>
</gene>
<comment type="function">
    <text evidence="1">Catalyzes the anti-1,4-elimination of the C-3 phosphate and the C-6 proR hydrogen from 5-enolpyruvylshikimate-3-phosphate (EPSP) to yield chorismate, which is the branch point compound that serves as the starting substrate for the three terminal pathways of aromatic amino acid biosynthesis. This reaction introduces a second double bond into the aromatic ring system.</text>
</comment>
<comment type="catalytic activity">
    <reaction evidence="1">
        <text>5-O-(1-carboxyvinyl)-3-phosphoshikimate = chorismate + phosphate</text>
        <dbReference type="Rhea" id="RHEA:21020"/>
        <dbReference type="ChEBI" id="CHEBI:29748"/>
        <dbReference type="ChEBI" id="CHEBI:43474"/>
        <dbReference type="ChEBI" id="CHEBI:57701"/>
        <dbReference type="EC" id="4.2.3.5"/>
    </reaction>
</comment>
<comment type="cofactor">
    <cofactor evidence="1">
        <name>FMNH2</name>
        <dbReference type="ChEBI" id="CHEBI:57618"/>
    </cofactor>
    <text evidence="1">Reduced FMN (FMNH(2)).</text>
</comment>
<comment type="pathway">
    <text evidence="1">Metabolic intermediate biosynthesis; chorismate biosynthesis; chorismate from D-erythrose 4-phosphate and phosphoenolpyruvate: step 7/7.</text>
</comment>
<comment type="subunit">
    <text evidence="1">Homotetramer.</text>
</comment>
<comment type="similarity">
    <text evidence="1">Belongs to the chorismate synthase family.</text>
</comment>
<name>AROC_STRP6</name>
<evidence type="ECO:0000255" key="1">
    <source>
        <dbReference type="HAMAP-Rule" id="MF_00300"/>
    </source>
</evidence>
<feature type="chain" id="PRO_0000140659" description="Chorismate synthase">
    <location>
        <begin position="1"/>
        <end position="388"/>
    </location>
</feature>
<feature type="binding site" evidence="1">
    <location>
        <position position="39"/>
    </location>
    <ligand>
        <name>NADP(+)</name>
        <dbReference type="ChEBI" id="CHEBI:58349"/>
    </ligand>
</feature>
<feature type="binding site" evidence="1">
    <location>
        <position position="45"/>
    </location>
    <ligand>
        <name>NADP(+)</name>
        <dbReference type="ChEBI" id="CHEBI:58349"/>
    </ligand>
</feature>
<feature type="binding site" evidence="1">
    <location>
        <begin position="130"/>
        <end position="132"/>
    </location>
    <ligand>
        <name>FMN</name>
        <dbReference type="ChEBI" id="CHEBI:58210"/>
    </ligand>
</feature>
<feature type="binding site" evidence="1">
    <location>
        <begin position="251"/>
        <end position="252"/>
    </location>
    <ligand>
        <name>FMN</name>
        <dbReference type="ChEBI" id="CHEBI:58210"/>
    </ligand>
</feature>
<feature type="binding site" evidence="1">
    <location>
        <position position="296"/>
    </location>
    <ligand>
        <name>FMN</name>
        <dbReference type="ChEBI" id="CHEBI:58210"/>
    </ligand>
</feature>
<feature type="binding site" evidence="1">
    <location>
        <begin position="311"/>
        <end position="315"/>
    </location>
    <ligand>
        <name>FMN</name>
        <dbReference type="ChEBI" id="CHEBI:58210"/>
    </ligand>
</feature>
<feature type="binding site" evidence="1">
    <location>
        <position position="337"/>
    </location>
    <ligand>
        <name>FMN</name>
        <dbReference type="ChEBI" id="CHEBI:58210"/>
    </ligand>
</feature>
<organism>
    <name type="scientific">Streptococcus pyogenes serotype M6 (strain ATCC BAA-946 / MGAS10394)</name>
    <dbReference type="NCBI Taxonomy" id="286636"/>
    <lineage>
        <taxon>Bacteria</taxon>
        <taxon>Bacillati</taxon>
        <taxon>Bacillota</taxon>
        <taxon>Bacilli</taxon>
        <taxon>Lactobacillales</taxon>
        <taxon>Streptococcaceae</taxon>
        <taxon>Streptococcus</taxon>
    </lineage>
</organism>